<organism>
    <name type="scientific">Shewanella amazonensis (strain ATCC BAA-1098 / SB2B)</name>
    <dbReference type="NCBI Taxonomy" id="326297"/>
    <lineage>
        <taxon>Bacteria</taxon>
        <taxon>Pseudomonadati</taxon>
        <taxon>Pseudomonadota</taxon>
        <taxon>Gammaproteobacteria</taxon>
        <taxon>Alteromonadales</taxon>
        <taxon>Shewanellaceae</taxon>
        <taxon>Shewanella</taxon>
    </lineage>
</organism>
<sequence length="341" mass="37465">MLSNPSELVTRNIEQLENQRVMLINIEADELGHHLTRHCSEVAALALDFNHFQAQPSGKSGFRCEFGHQWSRDEKFDVVVVYFPKAKALAPYLFALAAWHLRPDGTLLITGENKGGIRSVDKLLGNAFSPACKIDNARHCLLYSATLVAEATKPNAEDWVSRYRLSLPSGDIQICNMVGVFSDKQLDQGTALLLDNLPKLEGRVLDFGCGAGVIAIALMQQNPGLQLECVDINAMALLSCELSLKANGMEAKVYASDGLAQTDGLFNAIVSNPPFHDGLSSTTDIATRFVADSYKQLHKGGNWQIVANRHLPYSDTIAKVFGEVNTVAENNKYKVYANKKR</sequence>
<gene>
    <name evidence="1" type="primary">rsmC</name>
    <name type="ordered locus">Sama_0569</name>
</gene>
<name>RSMC_SHEAM</name>
<keyword id="KW-0963">Cytoplasm</keyword>
<keyword id="KW-0489">Methyltransferase</keyword>
<keyword id="KW-1185">Reference proteome</keyword>
<keyword id="KW-0698">rRNA processing</keyword>
<keyword id="KW-0949">S-adenosyl-L-methionine</keyword>
<keyword id="KW-0808">Transferase</keyword>
<protein>
    <recommendedName>
        <fullName evidence="1">Ribosomal RNA small subunit methyltransferase C</fullName>
        <ecNumber evidence="1">2.1.1.172</ecNumber>
    </recommendedName>
    <alternativeName>
        <fullName evidence="1">16S rRNA m2G1207 methyltransferase</fullName>
    </alternativeName>
    <alternativeName>
        <fullName evidence="1">rRNA (guanine-N(2)-)-methyltransferase RsmC</fullName>
    </alternativeName>
</protein>
<accession>A1S321</accession>
<feature type="chain" id="PRO_0000369766" description="Ribosomal RNA small subunit methyltransferase C">
    <location>
        <begin position="1"/>
        <end position="341"/>
    </location>
</feature>
<dbReference type="EC" id="2.1.1.172" evidence="1"/>
<dbReference type="EMBL" id="CP000507">
    <property type="protein sequence ID" value="ABL98777.1"/>
    <property type="status" value="ALT_INIT"/>
    <property type="molecule type" value="Genomic_DNA"/>
</dbReference>
<dbReference type="RefSeq" id="WP_041409658.1">
    <property type="nucleotide sequence ID" value="NC_008700.1"/>
</dbReference>
<dbReference type="SMR" id="A1S321"/>
<dbReference type="STRING" id="326297.Sama_0569"/>
<dbReference type="KEGG" id="saz:Sama_0569"/>
<dbReference type="eggNOG" id="COG2813">
    <property type="taxonomic scope" value="Bacteria"/>
</dbReference>
<dbReference type="HOGENOM" id="CLU_049581_0_1_6"/>
<dbReference type="OrthoDB" id="9816072at2"/>
<dbReference type="Proteomes" id="UP000009175">
    <property type="component" value="Chromosome"/>
</dbReference>
<dbReference type="GO" id="GO:0005737">
    <property type="term" value="C:cytoplasm"/>
    <property type="evidence" value="ECO:0007669"/>
    <property type="project" value="UniProtKB-SubCell"/>
</dbReference>
<dbReference type="GO" id="GO:0052914">
    <property type="term" value="F:16S rRNA (guanine(1207)-N(2))-methyltransferase activity"/>
    <property type="evidence" value="ECO:0007669"/>
    <property type="project" value="UniProtKB-EC"/>
</dbReference>
<dbReference type="GO" id="GO:0003676">
    <property type="term" value="F:nucleic acid binding"/>
    <property type="evidence" value="ECO:0007669"/>
    <property type="project" value="InterPro"/>
</dbReference>
<dbReference type="CDD" id="cd02440">
    <property type="entry name" value="AdoMet_MTases"/>
    <property type="match status" value="1"/>
</dbReference>
<dbReference type="Gene3D" id="3.40.50.150">
    <property type="entry name" value="Vaccinia Virus protein VP39"/>
    <property type="match status" value="2"/>
</dbReference>
<dbReference type="HAMAP" id="MF_01862">
    <property type="entry name" value="16SrRNA_methyltr_C"/>
    <property type="match status" value="1"/>
</dbReference>
<dbReference type="InterPro" id="IPR002052">
    <property type="entry name" value="DNA_methylase_N6_adenine_CS"/>
</dbReference>
<dbReference type="InterPro" id="IPR013675">
    <property type="entry name" value="Mtase_sm_N"/>
</dbReference>
<dbReference type="InterPro" id="IPR023543">
    <property type="entry name" value="rRNA_ssu_MeTfrase_C"/>
</dbReference>
<dbReference type="InterPro" id="IPR046977">
    <property type="entry name" value="RsmC/RlmG"/>
</dbReference>
<dbReference type="InterPro" id="IPR029063">
    <property type="entry name" value="SAM-dependent_MTases_sf"/>
</dbReference>
<dbReference type="InterPro" id="IPR007848">
    <property type="entry name" value="Small_mtfrase_dom"/>
</dbReference>
<dbReference type="PANTHER" id="PTHR47816">
    <property type="entry name" value="RIBOSOMAL RNA SMALL SUBUNIT METHYLTRANSFERASE C"/>
    <property type="match status" value="1"/>
</dbReference>
<dbReference type="PANTHER" id="PTHR47816:SF4">
    <property type="entry name" value="RIBOSOMAL RNA SMALL SUBUNIT METHYLTRANSFERASE C"/>
    <property type="match status" value="1"/>
</dbReference>
<dbReference type="Pfam" id="PF05175">
    <property type="entry name" value="MTS"/>
    <property type="match status" value="1"/>
</dbReference>
<dbReference type="Pfam" id="PF08468">
    <property type="entry name" value="MTS_N"/>
    <property type="match status" value="1"/>
</dbReference>
<dbReference type="SUPFAM" id="SSF53335">
    <property type="entry name" value="S-adenosyl-L-methionine-dependent methyltransferases"/>
    <property type="match status" value="2"/>
</dbReference>
<reference key="1">
    <citation type="submission" date="2006-12" db="EMBL/GenBank/DDBJ databases">
        <title>Complete sequence of Shewanella amazonensis SB2B.</title>
        <authorList>
            <consortium name="US DOE Joint Genome Institute"/>
            <person name="Copeland A."/>
            <person name="Lucas S."/>
            <person name="Lapidus A."/>
            <person name="Barry K."/>
            <person name="Detter J.C."/>
            <person name="Glavina del Rio T."/>
            <person name="Hammon N."/>
            <person name="Israni S."/>
            <person name="Dalin E."/>
            <person name="Tice H."/>
            <person name="Pitluck S."/>
            <person name="Munk A.C."/>
            <person name="Brettin T."/>
            <person name="Bruce D."/>
            <person name="Han C."/>
            <person name="Tapia R."/>
            <person name="Gilna P."/>
            <person name="Schmutz J."/>
            <person name="Larimer F."/>
            <person name="Land M."/>
            <person name="Hauser L."/>
            <person name="Kyrpides N."/>
            <person name="Mikhailova N."/>
            <person name="Fredrickson J."/>
            <person name="Richardson P."/>
        </authorList>
    </citation>
    <scope>NUCLEOTIDE SEQUENCE [LARGE SCALE GENOMIC DNA]</scope>
    <source>
        <strain>ATCC BAA-1098 / SB2B</strain>
    </source>
</reference>
<comment type="function">
    <text evidence="1">Specifically methylates the guanine in position 1207 of 16S rRNA in the 30S particle.</text>
</comment>
<comment type="catalytic activity">
    <reaction evidence="1">
        <text>guanosine(1207) in 16S rRNA + S-adenosyl-L-methionine = N(2)-methylguanosine(1207) in 16S rRNA + S-adenosyl-L-homocysteine + H(+)</text>
        <dbReference type="Rhea" id="RHEA:42736"/>
        <dbReference type="Rhea" id="RHEA-COMP:10213"/>
        <dbReference type="Rhea" id="RHEA-COMP:10214"/>
        <dbReference type="ChEBI" id="CHEBI:15378"/>
        <dbReference type="ChEBI" id="CHEBI:57856"/>
        <dbReference type="ChEBI" id="CHEBI:59789"/>
        <dbReference type="ChEBI" id="CHEBI:74269"/>
        <dbReference type="ChEBI" id="CHEBI:74481"/>
        <dbReference type="EC" id="2.1.1.172"/>
    </reaction>
</comment>
<comment type="subunit">
    <text evidence="1">Monomer.</text>
</comment>
<comment type="subcellular location">
    <subcellularLocation>
        <location evidence="1">Cytoplasm</location>
    </subcellularLocation>
</comment>
<comment type="similarity">
    <text evidence="1">Belongs to the methyltransferase superfamily. RsmC family.</text>
</comment>
<comment type="sequence caution" evidence="2">
    <conflict type="erroneous initiation">
        <sequence resource="EMBL-CDS" id="ABL98777"/>
    </conflict>
</comment>
<evidence type="ECO:0000255" key="1">
    <source>
        <dbReference type="HAMAP-Rule" id="MF_01862"/>
    </source>
</evidence>
<evidence type="ECO:0000305" key="2"/>
<proteinExistence type="inferred from homology"/>